<organism>
    <name type="scientific">Salinibacter ruber (strain DSM 13855 / M31)</name>
    <dbReference type="NCBI Taxonomy" id="309807"/>
    <lineage>
        <taxon>Bacteria</taxon>
        <taxon>Pseudomonadati</taxon>
        <taxon>Rhodothermota</taxon>
        <taxon>Rhodothermia</taxon>
        <taxon>Rhodothermales</taxon>
        <taxon>Salinibacteraceae</taxon>
        <taxon>Salinibacter</taxon>
    </lineage>
</organism>
<comment type="function">
    <text evidence="1">F(1)F(0) ATP synthase produces ATP from ADP in the presence of a proton or sodium gradient. F-type ATPases consist of two structural domains, F(1) containing the extramembraneous catalytic core and F(0) containing the membrane proton channel, linked together by a central stalk and a peripheral stalk. During catalysis, ATP synthesis in the catalytic domain of F(1) is coupled via a rotary mechanism of the central stalk subunits to proton translocation.</text>
</comment>
<comment type="function">
    <text evidence="1">This protein is part of the stalk that links CF(0) to CF(1). It either transmits conformational changes from CF(0) to CF(1) or is implicated in proton conduction.</text>
</comment>
<comment type="subunit">
    <text evidence="1">F-type ATPases have 2 components, F(1) - the catalytic core - and F(0) - the membrane proton channel. F(1) has five subunits: alpha(3), beta(3), gamma(1), delta(1), epsilon(1). F(0) has three main subunits: a(1), b(2) and c(10-14). The alpha and beta chains form an alternating ring which encloses part of the gamma chain. F(1) is attached to F(0) by a central stalk formed by the gamma and epsilon chains, while a peripheral stalk is formed by the delta and b chains.</text>
</comment>
<comment type="subcellular location">
    <subcellularLocation>
        <location evidence="1">Cell inner membrane</location>
        <topology evidence="1">Peripheral membrane protein</topology>
    </subcellularLocation>
</comment>
<comment type="similarity">
    <text evidence="1">Belongs to the ATPase delta chain family.</text>
</comment>
<gene>
    <name evidence="1" type="primary">atpH</name>
    <name type="ordered locus">SRU_0914</name>
</gene>
<proteinExistence type="inferred from homology"/>
<feature type="chain" id="PRO_0000371109" description="ATP synthase subunit delta">
    <location>
        <begin position="1"/>
        <end position="190"/>
    </location>
</feature>
<keyword id="KW-0066">ATP synthesis</keyword>
<keyword id="KW-0997">Cell inner membrane</keyword>
<keyword id="KW-1003">Cell membrane</keyword>
<keyword id="KW-0139">CF(1)</keyword>
<keyword id="KW-0375">Hydrogen ion transport</keyword>
<keyword id="KW-0406">Ion transport</keyword>
<keyword id="KW-0472">Membrane</keyword>
<keyword id="KW-1185">Reference proteome</keyword>
<keyword id="KW-0813">Transport</keyword>
<sequence length="190" mass="21433">MSQRTVTRRYAAALYEEANANGVLEAVDEDVRMLLESLDSNRPLVRVFESPVIPQDKKDSIVRELLGDRVEDLTVRFLRLLIRKDRETMTEAILDQYQTLRDEQRGIVDAEVTVARPLADETRTTLVGVLEEKTGKEIRLHLHEDADLIGGLVVRIGDRVFDASVRSQLGALHDRLREATLSENALDDGA</sequence>
<dbReference type="EMBL" id="CP000159">
    <property type="protein sequence ID" value="ABC45269.1"/>
    <property type="molecule type" value="Genomic_DNA"/>
</dbReference>
<dbReference type="RefSeq" id="WP_011403676.1">
    <property type="nucleotide sequence ID" value="NC_007677.1"/>
</dbReference>
<dbReference type="RefSeq" id="YP_445048.1">
    <property type="nucleotide sequence ID" value="NC_007677.1"/>
</dbReference>
<dbReference type="SMR" id="Q2S433"/>
<dbReference type="STRING" id="309807.SRU_0914"/>
<dbReference type="EnsemblBacteria" id="ABC45269">
    <property type="protein sequence ID" value="ABC45269"/>
    <property type="gene ID" value="SRU_0914"/>
</dbReference>
<dbReference type="KEGG" id="sru:SRU_0914"/>
<dbReference type="eggNOG" id="COG0712">
    <property type="taxonomic scope" value="Bacteria"/>
</dbReference>
<dbReference type="HOGENOM" id="CLU_085114_4_1_10"/>
<dbReference type="OrthoDB" id="9802471at2"/>
<dbReference type="Proteomes" id="UP000008674">
    <property type="component" value="Chromosome"/>
</dbReference>
<dbReference type="GO" id="GO:0005886">
    <property type="term" value="C:plasma membrane"/>
    <property type="evidence" value="ECO:0007669"/>
    <property type="project" value="UniProtKB-SubCell"/>
</dbReference>
<dbReference type="GO" id="GO:0045259">
    <property type="term" value="C:proton-transporting ATP synthase complex"/>
    <property type="evidence" value="ECO:0007669"/>
    <property type="project" value="UniProtKB-KW"/>
</dbReference>
<dbReference type="GO" id="GO:0046933">
    <property type="term" value="F:proton-transporting ATP synthase activity, rotational mechanism"/>
    <property type="evidence" value="ECO:0007669"/>
    <property type="project" value="UniProtKB-UniRule"/>
</dbReference>
<dbReference type="Gene3D" id="1.10.520.20">
    <property type="entry name" value="N-terminal domain of the delta subunit of the F1F0-ATP synthase"/>
    <property type="match status" value="1"/>
</dbReference>
<dbReference type="HAMAP" id="MF_01416">
    <property type="entry name" value="ATP_synth_delta_bact"/>
    <property type="match status" value="1"/>
</dbReference>
<dbReference type="InterPro" id="IPR026015">
    <property type="entry name" value="ATP_synth_OSCP/delta_N_sf"/>
</dbReference>
<dbReference type="InterPro" id="IPR000711">
    <property type="entry name" value="ATPase_OSCP/dsu"/>
</dbReference>
<dbReference type="NCBIfam" id="TIGR01145">
    <property type="entry name" value="ATP_synt_delta"/>
    <property type="match status" value="1"/>
</dbReference>
<dbReference type="PANTHER" id="PTHR11910">
    <property type="entry name" value="ATP SYNTHASE DELTA CHAIN"/>
    <property type="match status" value="1"/>
</dbReference>
<dbReference type="Pfam" id="PF00213">
    <property type="entry name" value="OSCP"/>
    <property type="match status" value="1"/>
</dbReference>
<dbReference type="PRINTS" id="PR00125">
    <property type="entry name" value="ATPASEDELTA"/>
</dbReference>
<dbReference type="SUPFAM" id="SSF47928">
    <property type="entry name" value="N-terminal domain of the delta subunit of the F1F0-ATP synthase"/>
    <property type="match status" value="1"/>
</dbReference>
<reference key="1">
    <citation type="journal article" date="2005" name="Proc. Natl. Acad. Sci. U.S.A.">
        <title>The genome of Salinibacter ruber: convergence and gene exchange among hyperhalophilic bacteria and archaea.</title>
        <authorList>
            <person name="Mongodin E.F."/>
            <person name="Nelson K.E."/>
            <person name="Daugherty S."/>
            <person name="DeBoy R.T."/>
            <person name="Wister J."/>
            <person name="Khouri H."/>
            <person name="Weidman J."/>
            <person name="Walsh D.A."/>
            <person name="Papke R.T."/>
            <person name="Sanchez Perez G."/>
            <person name="Sharma A.K."/>
            <person name="Nesbo C.L."/>
            <person name="MacLeod D."/>
            <person name="Bapteste E."/>
            <person name="Doolittle W.F."/>
            <person name="Charlebois R.L."/>
            <person name="Legault B."/>
            <person name="Rodriguez-Valera F."/>
        </authorList>
    </citation>
    <scope>NUCLEOTIDE SEQUENCE [LARGE SCALE GENOMIC DNA]</scope>
    <source>
        <strain>DSM 13855 / CECT 5946 / M31</strain>
    </source>
</reference>
<name>ATPD_SALRD</name>
<accession>Q2S433</accession>
<evidence type="ECO:0000255" key="1">
    <source>
        <dbReference type="HAMAP-Rule" id="MF_01416"/>
    </source>
</evidence>
<protein>
    <recommendedName>
        <fullName evidence="1">ATP synthase subunit delta</fullName>
    </recommendedName>
    <alternativeName>
        <fullName evidence="1">ATP synthase F(1) sector subunit delta</fullName>
    </alternativeName>
    <alternativeName>
        <fullName evidence="1">F-type ATPase subunit delta</fullName>
        <shortName evidence="1">F-ATPase subunit delta</shortName>
    </alternativeName>
</protein>